<reference key="1">
    <citation type="journal article" date="2008" name="PLoS ONE">
        <title>Comparative analysis of Acinetobacters: three genomes for three lifestyles.</title>
        <authorList>
            <person name="Vallenet D."/>
            <person name="Nordmann P."/>
            <person name="Barbe V."/>
            <person name="Poirel L."/>
            <person name="Mangenot S."/>
            <person name="Bataille E."/>
            <person name="Dossat C."/>
            <person name="Gas S."/>
            <person name="Kreimeyer A."/>
            <person name="Lenoble P."/>
            <person name="Oztas S."/>
            <person name="Poulain J."/>
            <person name="Segurens B."/>
            <person name="Robert C."/>
            <person name="Abergel C."/>
            <person name="Claverie J.-M."/>
            <person name="Raoult D."/>
            <person name="Medigue C."/>
            <person name="Weissenbach J."/>
            <person name="Cruveiller S."/>
        </authorList>
    </citation>
    <scope>NUCLEOTIDE SEQUENCE [LARGE SCALE GENOMIC DNA]</scope>
    <source>
        <strain>SDF</strain>
    </source>
</reference>
<name>TRPA_ACIBS</name>
<dbReference type="EC" id="4.2.1.20" evidence="1"/>
<dbReference type="EMBL" id="CU468230">
    <property type="protein sequence ID" value="CAO99952.1"/>
    <property type="molecule type" value="Genomic_DNA"/>
</dbReference>
<dbReference type="SMR" id="B0VRF8"/>
<dbReference type="KEGG" id="abm:ABSDF0573"/>
<dbReference type="HOGENOM" id="CLU_016734_0_0_6"/>
<dbReference type="UniPathway" id="UPA00035">
    <property type="reaction ID" value="UER00044"/>
</dbReference>
<dbReference type="Proteomes" id="UP000001741">
    <property type="component" value="Chromosome"/>
</dbReference>
<dbReference type="GO" id="GO:0005829">
    <property type="term" value="C:cytosol"/>
    <property type="evidence" value="ECO:0007669"/>
    <property type="project" value="TreeGrafter"/>
</dbReference>
<dbReference type="GO" id="GO:0004834">
    <property type="term" value="F:tryptophan synthase activity"/>
    <property type="evidence" value="ECO:0007669"/>
    <property type="project" value="UniProtKB-UniRule"/>
</dbReference>
<dbReference type="CDD" id="cd04724">
    <property type="entry name" value="Tryptophan_synthase_alpha"/>
    <property type="match status" value="1"/>
</dbReference>
<dbReference type="FunFam" id="3.20.20.70:FF:000037">
    <property type="entry name" value="Tryptophan synthase alpha chain"/>
    <property type="match status" value="1"/>
</dbReference>
<dbReference type="Gene3D" id="3.20.20.70">
    <property type="entry name" value="Aldolase class I"/>
    <property type="match status" value="1"/>
</dbReference>
<dbReference type="HAMAP" id="MF_00131">
    <property type="entry name" value="Trp_synth_alpha"/>
    <property type="match status" value="1"/>
</dbReference>
<dbReference type="InterPro" id="IPR013785">
    <property type="entry name" value="Aldolase_TIM"/>
</dbReference>
<dbReference type="InterPro" id="IPR011060">
    <property type="entry name" value="RibuloseP-bd_barrel"/>
</dbReference>
<dbReference type="InterPro" id="IPR018204">
    <property type="entry name" value="Trp_synthase_alpha_AS"/>
</dbReference>
<dbReference type="InterPro" id="IPR002028">
    <property type="entry name" value="Trp_synthase_suA"/>
</dbReference>
<dbReference type="NCBIfam" id="TIGR00262">
    <property type="entry name" value="trpA"/>
    <property type="match status" value="1"/>
</dbReference>
<dbReference type="PANTHER" id="PTHR43406:SF1">
    <property type="entry name" value="TRYPTOPHAN SYNTHASE ALPHA CHAIN, CHLOROPLASTIC"/>
    <property type="match status" value="1"/>
</dbReference>
<dbReference type="PANTHER" id="PTHR43406">
    <property type="entry name" value="TRYPTOPHAN SYNTHASE, ALPHA CHAIN"/>
    <property type="match status" value="1"/>
</dbReference>
<dbReference type="Pfam" id="PF00290">
    <property type="entry name" value="Trp_syntA"/>
    <property type="match status" value="1"/>
</dbReference>
<dbReference type="SUPFAM" id="SSF51366">
    <property type="entry name" value="Ribulose-phoshate binding barrel"/>
    <property type="match status" value="1"/>
</dbReference>
<dbReference type="PROSITE" id="PS00167">
    <property type="entry name" value="TRP_SYNTHASE_ALPHA"/>
    <property type="match status" value="1"/>
</dbReference>
<evidence type="ECO:0000255" key="1">
    <source>
        <dbReference type="HAMAP-Rule" id="MF_00131"/>
    </source>
</evidence>
<sequence length="267" mass="28441">MSRLATRFEKLQSQQRKALVSYVMAGDPQPQVTVPLLHKMVAAGVDVIELGLPFSDPMADGPVIALAAERALAAGTNTLDALNMVKEFREQDQETPVVLMGYLNPVEVIGYEKFVSYAKQCGVDGLLLVDLPPEESKEFGAILKQHDMDQIFLLAPTSTDQRIQHVANQASGFIYYVSLKGVTGAATLDTSEAAARIEKIKGMTNVPVGVGFGISDAASAKAMGSVADAVIVGSAFVKSFATLAADEAVEQTVNKVKELRAALDELV</sequence>
<proteinExistence type="inferred from homology"/>
<gene>
    <name evidence="1" type="primary">trpA</name>
    <name type="ordered locus">ABSDF0573</name>
</gene>
<comment type="function">
    <text evidence="1">The alpha subunit is responsible for the aldol cleavage of indoleglycerol phosphate to indole and glyceraldehyde 3-phosphate.</text>
</comment>
<comment type="catalytic activity">
    <reaction evidence="1">
        <text>(1S,2R)-1-C-(indol-3-yl)glycerol 3-phosphate + L-serine = D-glyceraldehyde 3-phosphate + L-tryptophan + H2O</text>
        <dbReference type="Rhea" id="RHEA:10532"/>
        <dbReference type="ChEBI" id="CHEBI:15377"/>
        <dbReference type="ChEBI" id="CHEBI:33384"/>
        <dbReference type="ChEBI" id="CHEBI:57912"/>
        <dbReference type="ChEBI" id="CHEBI:58866"/>
        <dbReference type="ChEBI" id="CHEBI:59776"/>
        <dbReference type="EC" id="4.2.1.20"/>
    </reaction>
</comment>
<comment type="pathway">
    <text evidence="1">Amino-acid biosynthesis; L-tryptophan biosynthesis; L-tryptophan from chorismate: step 5/5.</text>
</comment>
<comment type="subunit">
    <text evidence="1">Tetramer of two alpha and two beta chains.</text>
</comment>
<comment type="similarity">
    <text evidence="1">Belongs to the TrpA family.</text>
</comment>
<organism>
    <name type="scientific">Acinetobacter baumannii (strain SDF)</name>
    <dbReference type="NCBI Taxonomy" id="509170"/>
    <lineage>
        <taxon>Bacteria</taxon>
        <taxon>Pseudomonadati</taxon>
        <taxon>Pseudomonadota</taxon>
        <taxon>Gammaproteobacteria</taxon>
        <taxon>Moraxellales</taxon>
        <taxon>Moraxellaceae</taxon>
        <taxon>Acinetobacter</taxon>
        <taxon>Acinetobacter calcoaceticus/baumannii complex</taxon>
    </lineage>
</organism>
<protein>
    <recommendedName>
        <fullName evidence="1">Tryptophan synthase alpha chain</fullName>
        <ecNumber evidence="1">4.2.1.20</ecNumber>
    </recommendedName>
</protein>
<keyword id="KW-0028">Amino-acid biosynthesis</keyword>
<keyword id="KW-0057">Aromatic amino acid biosynthesis</keyword>
<keyword id="KW-0456">Lyase</keyword>
<keyword id="KW-0822">Tryptophan biosynthesis</keyword>
<accession>B0VRF8</accession>
<feature type="chain" id="PRO_1000095685" description="Tryptophan synthase alpha chain">
    <location>
        <begin position="1"/>
        <end position="267"/>
    </location>
</feature>
<feature type="active site" description="Proton acceptor" evidence="1">
    <location>
        <position position="49"/>
    </location>
</feature>
<feature type="active site" description="Proton acceptor" evidence="1">
    <location>
        <position position="60"/>
    </location>
</feature>